<keyword id="KW-0165">Cleavage on pair of basic residues</keyword>
<keyword id="KW-0903">Direct protein sequencing</keyword>
<keyword id="KW-1015">Disulfide bond</keyword>
<keyword id="KW-0872">Ion channel impairing toxin</keyword>
<keyword id="KW-0166">Nematocyst</keyword>
<keyword id="KW-0528">Neurotoxin</keyword>
<keyword id="KW-0964">Secreted</keyword>
<keyword id="KW-0732">Signal</keyword>
<keyword id="KW-0800">Toxin</keyword>
<keyword id="KW-0738">Voltage-gated sodium channel impairing toxin</keyword>
<name>NA11_ACTEQ</name>
<protein>
    <recommendedName>
        <fullName evidence="7">Delta-actitoxin-Aeq2a</fullName>
        <shortName evidence="7">Delta-AITX-Aeq2a</shortName>
    </recommendedName>
    <alternativeName>
        <fullName evidence="6">Ae1</fullName>
    </alternativeName>
    <alternativeName>
        <fullName evidence="6">Ae1-1</fullName>
    </alternativeName>
    <alternativeName>
        <fullName evidence="5">AeNa</fullName>
    </alternativeName>
    <alternativeName>
        <fullName evidence="10">Neurotoxin 1</fullName>
    </alternativeName>
    <alternativeName>
        <fullName evidence="8">Neurotoxin Ae I</fullName>
    </alternativeName>
</protein>
<reference key="1">
    <citation type="journal article" date="2000" name="Biochim. Biophys. Acta">
        <title>A common motif in proparts of Cnidarian toxins and nematocyst collagens and its putative role.</title>
        <authorList>
            <person name="Anderluh G."/>
            <person name="Podlesek Z."/>
            <person name="Macek P."/>
        </authorList>
    </citation>
    <scope>NUCLEOTIDE SEQUENCE [MRNA]</scope>
</reference>
<reference key="2">
    <citation type="journal article" date="2008" name="Mol. Biol. Evol.">
        <title>Concerted evolution of sea anemone neurotoxin genes is revealed through analysis of the Nematostella vectensis genome.</title>
        <authorList>
            <person name="Moran Y."/>
            <person name="Weinberger H."/>
            <person name="Sullivan J.C."/>
            <person name="Reitzel A.M."/>
            <person name="Finnerty J.R."/>
            <person name="Gurevitz M."/>
        </authorList>
    </citation>
    <scope>NUCLEOTIDE SEQUENCE [GENOMIC DNA]</scope>
</reference>
<reference key="3">
    <citation type="journal article" date="1996" name="Toxicon">
        <title>A polypeptide toxin in the sea anemone Actinia equina homologous with other sea anemone sodium channel toxins: isolation and amino acid sequence.</title>
        <authorList>
            <person name="Lin X.-Y."/>
            <person name="Ishida M."/>
            <person name="Nagashima Y."/>
            <person name="Shiomi K."/>
        </authorList>
    </citation>
    <scope>PROTEIN SEQUENCE OF 29-82</scope>
    <scope>FUNCTION</scope>
</reference>
<reference key="4">
    <citation type="journal article" date="2012" name="Toxicon">
        <title>Development of a rational nomenclature for naming peptide and protein toxins from sea anemones.</title>
        <authorList>
            <person name="Oliveira J.S."/>
            <person name="Fuentes-Silva D."/>
            <person name="King G.F."/>
        </authorList>
    </citation>
    <scope>NOMENCLATURE</scope>
</reference>
<evidence type="ECO:0000250" key="1"/>
<evidence type="ECO:0000250" key="2">
    <source>
        <dbReference type="UniProtKB" id="P01530"/>
    </source>
</evidence>
<evidence type="ECO:0000255" key="3"/>
<evidence type="ECO:0000269" key="4">
    <source>
    </source>
</evidence>
<evidence type="ECO:0000303" key="5">
    <source>
    </source>
</evidence>
<evidence type="ECO:0000303" key="6">
    <source>
    </source>
</evidence>
<evidence type="ECO:0000303" key="7">
    <source>
    </source>
</evidence>
<evidence type="ECO:0000303" key="8">
    <source>
    </source>
</evidence>
<evidence type="ECO:0000305" key="9"/>
<evidence type="ECO:0000312" key="10">
    <source>
        <dbReference type="EMBL" id="ABW97357.1"/>
    </source>
</evidence>
<organism>
    <name type="scientific">Actinia equina</name>
    <name type="common">Beadlet anemone</name>
    <dbReference type="NCBI Taxonomy" id="6106"/>
    <lineage>
        <taxon>Eukaryota</taxon>
        <taxon>Metazoa</taxon>
        <taxon>Cnidaria</taxon>
        <taxon>Anthozoa</taxon>
        <taxon>Hexacorallia</taxon>
        <taxon>Actiniaria</taxon>
        <taxon>Actiniidae</taxon>
        <taxon>Actinia</taxon>
    </lineage>
</organism>
<sequence length="82" mass="8696">MNRLMILVFAAVFLALASADEDVDIAKRGIPCLCVSDGPSTRGNKLSGTIWMKTGGYGGNGCPKGWHFCGKSRGLLSDCCKQ</sequence>
<proteinExistence type="evidence at protein level"/>
<feature type="signal peptide" evidence="3">
    <location>
        <begin position="1"/>
        <end position="19"/>
    </location>
</feature>
<feature type="propeptide" id="PRO_0000034821" evidence="4">
    <location>
        <begin position="20"/>
        <end position="26"/>
    </location>
</feature>
<feature type="chain" id="PRO_0000034822" description="Delta-actitoxin-Aeq2a" evidence="4">
    <location>
        <begin position="29"/>
        <end position="82"/>
    </location>
</feature>
<feature type="disulfide bond" evidence="2">
    <location>
        <begin position="32"/>
        <end position="79"/>
    </location>
</feature>
<feature type="disulfide bond" evidence="2">
    <location>
        <begin position="34"/>
        <end position="69"/>
    </location>
</feature>
<feature type="disulfide bond" evidence="2">
    <location>
        <begin position="62"/>
        <end position="80"/>
    </location>
</feature>
<accession>Q9NJQ2</accession>
<accession>B1NWU1</accession>
<accession>Q9TXD2</accession>
<dbReference type="EMBL" id="AF130344">
    <property type="protein sequence ID" value="AAF27538.1"/>
    <property type="molecule type" value="mRNA"/>
</dbReference>
<dbReference type="EMBL" id="EU124478">
    <property type="protein sequence ID" value="ABW97357.1"/>
    <property type="molecule type" value="Genomic_DNA"/>
</dbReference>
<dbReference type="SMR" id="Q9NJQ2"/>
<dbReference type="GO" id="GO:0005576">
    <property type="term" value="C:extracellular region"/>
    <property type="evidence" value="ECO:0007669"/>
    <property type="project" value="UniProtKB-SubCell"/>
</dbReference>
<dbReference type="GO" id="GO:0042151">
    <property type="term" value="C:nematocyst"/>
    <property type="evidence" value="ECO:0007669"/>
    <property type="project" value="UniProtKB-SubCell"/>
</dbReference>
<dbReference type="GO" id="GO:0017080">
    <property type="term" value="F:sodium channel regulator activity"/>
    <property type="evidence" value="ECO:0007669"/>
    <property type="project" value="UniProtKB-KW"/>
</dbReference>
<dbReference type="GO" id="GO:0090729">
    <property type="term" value="F:toxin activity"/>
    <property type="evidence" value="ECO:0007669"/>
    <property type="project" value="UniProtKB-KW"/>
</dbReference>
<dbReference type="Gene3D" id="2.20.20.10">
    <property type="entry name" value="Anthopleurin-A"/>
    <property type="match status" value="1"/>
</dbReference>
<dbReference type="InterPro" id="IPR023355">
    <property type="entry name" value="Myo_ane_neurotoxin_sf"/>
</dbReference>
<dbReference type="Pfam" id="PF00706">
    <property type="entry name" value="Toxin_4"/>
    <property type="match status" value="1"/>
</dbReference>
<dbReference type="SUPFAM" id="SSF57392">
    <property type="entry name" value="Defensin-like"/>
    <property type="match status" value="1"/>
</dbReference>
<comment type="function">
    <text evidence="1 4">Binds specifically to voltage-gated sodium channels (Nav), thereby delaying their inactivation during signal transduction (By similarity). Causes death to crabs (minimum lethal dose of 25 ug/kg) and mice (PubMed:8835334).</text>
</comment>
<comment type="subcellular location">
    <subcellularLocation>
        <location evidence="9">Secreted</location>
    </subcellularLocation>
    <subcellularLocation>
        <location evidence="9">Nematocyst</location>
    </subcellularLocation>
</comment>
<comment type="similarity">
    <text evidence="9">Belongs to the sea anemone sodium channel inhibitory toxin family. Type I subfamily.</text>
</comment>